<dbReference type="EMBL" id="AL033545">
    <property type="protein sequence ID" value="CAB52813.1"/>
    <property type="status" value="ALT_SEQ"/>
    <property type="molecule type" value="Genomic_DNA"/>
</dbReference>
<dbReference type="EMBL" id="AL161557">
    <property type="protein sequence ID" value="CAB79194.1"/>
    <property type="status" value="ALT_SEQ"/>
    <property type="molecule type" value="Genomic_DNA"/>
</dbReference>
<dbReference type="EMBL" id="CP002687">
    <property type="protein sequence ID" value="AEE84603.1"/>
    <property type="molecule type" value="Genomic_DNA"/>
</dbReference>
<dbReference type="PIR" id="D85256">
    <property type="entry name" value="D85256"/>
</dbReference>
<dbReference type="RefSeq" id="NP_193970.2">
    <property type="nucleotide sequence ID" value="NM_118365.6"/>
</dbReference>
<dbReference type="FunCoup" id="Q9SUY0">
    <property type="interactions" value="1"/>
</dbReference>
<dbReference type="PaxDb" id="3702-AT4G22390.1"/>
<dbReference type="ProteomicsDB" id="230655"/>
<dbReference type="EnsemblPlants" id="AT4G22390.1">
    <property type="protein sequence ID" value="AT4G22390.1"/>
    <property type="gene ID" value="AT4G22390"/>
</dbReference>
<dbReference type="GeneID" id="828334"/>
<dbReference type="Gramene" id="AT4G22390.1">
    <property type="protein sequence ID" value="AT4G22390.1"/>
    <property type="gene ID" value="AT4G22390"/>
</dbReference>
<dbReference type="KEGG" id="ath:AT4G22390"/>
<dbReference type="Araport" id="AT4G22390"/>
<dbReference type="TAIR" id="AT4G22390"/>
<dbReference type="eggNOG" id="ENOG502QVMN">
    <property type="taxonomic scope" value="Eukaryota"/>
</dbReference>
<dbReference type="HOGENOM" id="CLU_027176_1_2_1"/>
<dbReference type="InParanoid" id="Q9SUY0"/>
<dbReference type="PhylomeDB" id="Q9SUY0"/>
<dbReference type="PRO" id="PR:Q9SUY0"/>
<dbReference type="Proteomes" id="UP000006548">
    <property type="component" value="Chromosome 4"/>
</dbReference>
<dbReference type="ExpressionAtlas" id="Q9SUY0">
    <property type="expression patterns" value="baseline and differential"/>
</dbReference>
<dbReference type="InterPro" id="IPR017451">
    <property type="entry name" value="F-box-assoc_interact_dom"/>
</dbReference>
<dbReference type="InterPro" id="IPR050796">
    <property type="entry name" value="SCF_F-box_component"/>
</dbReference>
<dbReference type="NCBIfam" id="TIGR01640">
    <property type="entry name" value="F_box_assoc_1"/>
    <property type="match status" value="1"/>
</dbReference>
<dbReference type="PANTHER" id="PTHR31672">
    <property type="entry name" value="BNACNNG10540D PROTEIN"/>
    <property type="match status" value="1"/>
</dbReference>
<dbReference type="PANTHER" id="PTHR31672:SF13">
    <property type="entry name" value="F-BOX PROTEIN CPR30-LIKE"/>
    <property type="match status" value="1"/>
</dbReference>
<sequence length="402" mass="46189">MAECPTDLINEMFLRLRATTLVKCRVLSKPCFSLIDSPEFVSSHLRRRLETGEHLMILLRGPRLLRTVELDSPENVSDIPHPLQAGGFTEVFGSFNGVIGLCNSPVDLAIFNPSTRKIHRLPIEPIDFPERDITREYVFYGLGYDSVGDDFKVVRIVQCKLKEGKKKFPCPVEVKVFSLKKNSWKRVCLMFEFQILWISYYYHLLPRRGYGVVVNNHLHWILPRRQGVIAFNAIIKYDLASDDIGVLSFPQELYIEDNMDIGVLDGCVCLMCYDEYSHVDVWVLKEYEDYKSWTKLYRVPKPESVESVEFIRPLICSKDRSKILLEINNAANLMWFDLESQSLTTAGIECDSSFTADILVSSLVLGCKGDPTQAQRSKDQKMMPKSTKRWDGFLSKGFKLKL</sequence>
<comment type="sequence caution" evidence="1">
    <conflict type="erroneous gene model prediction">
        <sequence resource="EMBL-CDS" id="CAB52813"/>
    </conflict>
</comment>
<comment type="sequence caution" evidence="1">
    <conflict type="erroneous gene model prediction">
        <sequence resource="EMBL-CDS" id="CAB79194"/>
    </conflict>
</comment>
<protein>
    <recommendedName>
        <fullName>F-box protein At4g22390</fullName>
    </recommendedName>
</protein>
<evidence type="ECO:0000305" key="1"/>
<reference key="1">
    <citation type="journal article" date="1999" name="Nature">
        <title>Sequence and analysis of chromosome 4 of the plant Arabidopsis thaliana.</title>
        <authorList>
            <person name="Mayer K.F.X."/>
            <person name="Schueller C."/>
            <person name="Wambutt R."/>
            <person name="Murphy G."/>
            <person name="Volckaert G."/>
            <person name="Pohl T."/>
            <person name="Duesterhoeft A."/>
            <person name="Stiekema W."/>
            <person name="Entian K.-D."/>
            <person name="Terryn N."/>
            <person name="Harris B."/>
            <person name="Ansorge W."/>
            <person name="Brandt P."/>
            <person name="Grivell L.A."/>
            <person name="Rieger M."/>
            <person name="Weichselgartner M."/>
            <person name="de Simone V."/>
            <person name="Obermaier B."/>
            <person name="Mache R."/>
            <person name="Mueller M."/>
            <person name="Kreis M."/>
            <person name="Delseny M."/>
            <person name="Puigdomenech P."/>
            <person name="Watson M."/>
            <person name="Schmidtheini T."/>
            <person name="Reichert B."/>
            <person name="Portetelle D."/>
            <person name="Perez-Alonso M."/>
            <person name="Boutry M."/>
            <person name="Bancroft I."/>
            <person name="Vos P."/>
            <person name="Hoheisel J."/>
            <person name="Zimmermann W."/>
            <person name="Wedler H."/>
            <person name="Ridley P."/>
            <person name="Langham S.-A."/>
            <person name="McCullagh B."/>
            <person name="Bilham L."/>
            <person name="Robben J."/>
            <person name="van der Schueren J."/>
            <person name="Grymonprez B."/>
            <person name="Chuang Y.-J."/>
            <person name="Vandenbussche F."/>
            <person name="Braeken M."/>
            <person name="Weltjens I."/>
            <person name="Voet M."/>
            <person name="Bastiaens I."/>
            <person name="Aert R."/>
            <person name="Defoor E."/>
            <person name="Weitzenegger T."/>
            <person name="Bothe G."/>
            <person name="Ramsperger U."/>
            <person name="Hilbert H."/>
            <person name="Braun M."/>
            <person name="Holzer E."/>
            <person name="Brandt A."/>
            <person name="Peters S."/>
            <person name="van Staveren M."/>
            <person name="Dirkse W."/>
            <person name="Mooijman P."/>
            <person name="Klein Lankhorst R."/>
            <person name="Rose M."/>
            <person name="Hauf J."/>
            <person name="Koetter P."/>
            <person name="Berneiser S."/>
            <person name="Hempel S."/>
            <person name="Feldpausch M."/>
            <person name="Lamberth S."/>
            <person name="Van den Daele H."/>
            <person name="De Keyser A."/>
            <person name="Buysshaert C."/>
            <person name="Gielen J."/>
            <person name="Villarroel R."/>
            <person name="De Clercq R."/>
            <person name="van Montagu M."/>
            <person name="Rogers J."/>
            <person name="Cronin A."/>
            <person name="Quail M.A."/>
            <person name="Bray-Allen S."/>
            <person name="Clark L."/>
            <person name="Doggett J."/>
            <person name="Hall S."/>
            <person name="Kay M."/>
            <person name="Lennard N."/>
            <person name="McLay K."/>
            <person name="Mayes R."/>
            <person name="Pettett A."/>
            <person name="Rajandream M.A."/>
            <person name="Lyne M."/>
            <person name="Benes V."/>
            <person name="Rechmann S."/>
            <person name="Borkova D."/>
            <person name="Bloecker H."/>
            <person name="Scharfe M."/>
            <person name="Grimm M."/>
            <person name="Loehnert T.-H."/>
            <person name="Dose S."/>
            <person name="de Haan M."/>
            <person name="Maarse A.C."/>
            <person name="Schaefer M."/>
            <person name="Mueller-Auer S."/>
            <person name="Gabel C."/>
            <person name="Fuchs M."/>
            <person name="Fartmann B."/>
            <person name="Granderath K."/>
            <person name="Dauner D."/>
            <person name="Herzl A."/>
            <person name="Neumann S."/>
            <person name="Argiriou A."/>
            <person name="Vitale D."/>
            <person name="Liguori R."/>
            <person name="Piravandi E."/>
            <person name="Massenet O."/>
            <person name="Quigley F."/>
            <person name="Clabauld G."/>
            <person name="Muendlein A."/>
            <person name="Felber R."/>
            <person name="Schnabl S."/>
            <person name="Hiller R."/>
            <person name="Schmidt W."/>
            <person name="Lecharny A."/>
            <person name="Aubourg S."/>
            <person name="Chefdor F."/>
            <person name="Cooke R."/>
            <person name="Berger C."/>
            <person name="Monfort A."/>
            <person name="Casacuberta E."/>
            <person name="Gibbons T."/>
            <person name="Weber N."/>
            <person name="Vandenbol M."/>
            <person name="Bargues M."/>
            <person name="Terol J."/>
            <person name="Torres A."/>
            <person name="Perez-Perez A."/>
            <person name="Purnelle B."/>
            <person name="Bent E."/>
            <person name="Johnson S."/>
            <person name="Tacon D."/>
            <person name="Jesse T."/>
            <person name="Heijnen L."/>
            <person name="Schwarz S."/>
            <person name="Scholler P."/>
            <person name="Heber S."/>
            <person name="Francs P."/>
            <person name="Bielke C."/>
            <person name="Frishman D."/>
            <person name="Haase D."/>
            <person name="Lemcke K."/>
            <person name="Mewes H.-W."/>
            <person name="Stocker S."/>
            <person name="Zaccaria P."/>
            <person name="Bevan M."/>
            <person name="Wilson R.K."/>
            <person name="de la Bastide M."/>
            <person name="Habermann K."/>
            <person name="Parnell L."/>
            <person name="Dedhia N."/>
            <person name="Gnoj L."/>
            <person name="Schutz K."/>
            <person name="Huang E."/>
            <person name="Spiegel L."/>
            <person name="Sekhon M."/>
            <person name="Murray J."/>
            <person name="Sheet P."/>
            <person name="Cordes M."/>
            <person name="Abu-Threideh J."/>
            <person name="Stoneking T."/>
            <person name="Kalicki J."/>
            <person name="Graves T."/>
            <person name="Harmon G."/>
            <person name="Edwards J."/>
            <person name="Latreille P."/>
            <person name="Courtney L."/>
            <person name="Cloud J."/>
            <person name="Abbott A."/>
            <person name="Scott K."/>
            <person name="Johnson D."/>
            <person name="Minx P."/>
            <person name="Bentley D."/>
            <person name="Fulton B."/>
            <person name="Miller N."/>
            <person name="Greco T."/>
            <person name="Kemp K."/>
            <person name="Kramer J."/>
            <person name="Fulton L."/>
            <person name="Mardis E."/>
            <person name="Dante M."/>
            <person name="Pepin K."/>
            <person name="Hillier L.W."/>
            <person name="Nelson J."/>
            <person name="Spieth J."/>
            <person name="Ryan E."/>
            <person name="Andrews S."/>
            <person name="Geisel C."/>
            <person name="Layman D."/>
            <person name="Du H."/>
            <person name="Ali J."/>
            <person name="Berghoff A."/>
            <person name="Jones K."/>
            <person name="Drone K."/>
            <person name="Cotton M."/>
            <person name="Joshu C."/>
            <person name="Antonoiu B."/>
            <person name="Zidanic M."/>
            <person name="Strong C."/>
            <person name="Sun H."/>
            <person name="Lamar B."/>
            <person name="Yordan C."/>
            <person name="Ma P."/>
            <person name="Zhong J."/>
            <person name="Preston R."/>
            <person name="Vil D."/>
            <person name="Shekher M."/>
            <person name="Matero A."/>
            <person name="Shah R."/>
            <person name="Swaby I.K."/>
            <person name="O'Shaughnessy A."/>
            <person name="Rodriguez M."/>
            <person name="Hoffman J."/>
            <person name="Till S."/>
            <person name="Granat S."/>
            <person name="Shohdy N."/>
            <person name="Hasegawa A."/>
            <person name="Hameed A."/>
            <person name="Lodhi M."/>
            <person name="Johnson A."/>
            <person name="Chen E."/>
            <person name="Marra M.A."/>
            <person name="Martienssen R."/>
            <person name="McCombie W.R."/>
        </authorList>
    </citation>
    <scope>NUCLEOTIDE SEQUENCE [LARGE SCALE GENOMIC DNA]</scope>
    <source>
        <strain>cv. Columbia</strain>
    </source>
</reference>
<reference key="2">
    <citation type="journal article" date="2017" name="Plant J.">
        <title>Araport11: a complete reannotation of the Arabidopsis thaliana reference genome.</title>
        <authorList>
            <person name="Cheng C.Y."/>
            <person name="Krishnakumar V."/>
            <person name="Chan A.P."/>
            <person name="Thibaud-Nissen F."/>
            <person name="Schobel S."/>
            <person name="Town C.D."/>
        </authorList>
    </citation>
    <scope>GENOME REANNOTATION</scope>
    <source>
        <strain>cv. Columbia</strain>
    </source>
</reference>
<gene>
    <name type="ordered locus">At4g22390</name>
    <name type="ORF">F7K2.3</name>
</gene>
<accession>Q9SUY0</accession>
<organism>
    <name type="scientific">Arabidopsis thaliana</name>
    <name type="common">Mouse-ear cress</name>
    <dbReference type="NCBI Taxonomy" id="3702"/>
    <lineage>
        <taxon>Eukaryota</taxon>
        <taxon>Viridiplantae</taxon>
        <taxon>Streptophyta</taxon>
        <taxon>Embryophyta</taxon>
        <taxon>Tracheophyta</taxon>
        <taxon>Spermatophyta</taxon>
        <taxon>Magnoliopsida</taxon>
        <taxon>eudicotyledons</taxon>
        <taxon>Gunneridae</taxon>
        <taxon>Pentapetalae</taxon>
        <taxon>rosids</taxon>
        <taxon>malvids</taxon>
        <taxon>Brassicales</taxon>
        <taxon>Brassicaceae</taxon>
        <taxon>Camelineae</taxon>
        <taxon>Arabidopsis</taxon>
    </lineage>
</organism>
<feature type="chain" id="PRO_0000283511" description="F-box protein At4g22390">
    <location>
        <begin position="1"/>
        <end position="402"/>
    </location>
</feature>
<feature type="domain" description="F-box">
    <location>
        <begin position="1"/>
        <end position="49"/>
    </location>
</feature>
<proteinExistence type="evidence at transcript level"/>
<keyword id="KW-1185">Reference proteome</keyword>
<name>FB244_ARATH</name>